<name>OBG_HELMI</name>
<sequence length="442" mass="48491">MFYDQARIFVKGGDGGNGIVSFRREKYVPEGGPNGGDGGDGGNVIFIGDEGLRTLVDFRYQRHYKAERGEHGMGKNMHGRNGQDMTVRVPIGTVVKDAETGKILVDITCDGQQYIAARGGRGGRGNAKFVSSTNRVPLIAEKGEPGEEHWLELELKLLADVGLVGFPNVGKSTLIASVSAARPKIANYHFTTLEPNLGVVRIAEGQSFVMADIPGLIEGAHTGAGLGHDFLRHTERTRYLIHVLDISGSEGRDPLEDYDAINRELALYKPELADKPMVIAANKMDLPGAEENLARLREKLGEGAVIFPISAATRQGLEPLIYHVHKGLEELGPVVFERVTADAHMDVRFTGKTEERFKIHRDEQGVFVVTGKEVERHVAMTDMENEESVARLQRIFDVMGVDQALRDAGCQHGDPVRIGDLDFDFIEYAAQYAERDDDGENG</sequence>
<proteinExistence type="inferred from homology"/>
<organism>
    <name type="scientific">Heliobacterium modesticaldum (strain ATCC 51547 / Ice1)</name>
    <dbReference type="NCBI Taxonomy" id="498761"/>
    <lineage>
        <taxon>Bacteria</taxon>
        <taxon>Bacillati</taxon>
        <taxon>Bacillota</taxon>
        <taxon>Clostridia</taxon>
        <taxon>Eubacteriales</taxon>
        <taxon>Heliobacteriaceae</taxon>
        <taxon>Heliomicrobium</taxon>
    </lineage>
</organism>
<comment type="function">
    <text evidence="1">An essential GTPase which binds GTP, GDP and possibly (p)ppGpp with moderate affinity, with high nucleotide exchange rates and a fairly low GTP hydrolysis rate. Plays a role in control of the cell cycle, stress response, ribosome biogenesis and in those bacteria that undergo differentiation, in morphogenesis control.</text>
</comment>
<comment type="cofactor">
    <cofactor evidence="1">
        <name>Mg(2+)</name>
        <dbReference type="ChEBI" id="CHEBI:18420"/>
    </cofactor>
</comment>
<comment type="subunit">
    <text evidence="1">Monomer.</text>
</comment>
<comment type="subcellular location">
    <subcellularLocation>
        <location evidence="1">Cytoplasm</location>
    </subcellularLocation>
</comment>
<comment type="similarity">
    <text evidence="1">Belongs to the TRAFAC class OBG-HflX-like GTPase superfamily. OBG GTPase family.</text>
</comment>
<keyword id="KW-0963">Cytoplasm</keyword>
<keyword id="KW-0342">GTP-binding</keyword>
<keyword id="KW-0378">Hydrolase</keyword>
<keyword id="KW-0460">Magnesium</keyword>
<keyword id="KW-0479">Metal-binding</keyword>
<keyword id="KW-0547">Nucleotide-binding</keyword>
<keyword id="KW-1185">Reference proteome</keyword>
<evidence type="ECO:0000255" key="1">
    <source>
        <dbReference type="HAMAP-Rule" id="MF_01454"/>
    </source>
</evidence>
<evidence type="ECO:0000255" key="2">
    <source>
        <dbReference type="PROSITE-ProRule" id="PRU01229"/>
    </source>
</evidence>
<evidence type="ECO:0000255" key="3">
    <source>
        <dbReference type="PROSITE-ProRule" id="PRU01231"/>
    </source>
</evidence>
<feature type="chain" id="PRO_0000385977" description="GTPase Obg">
    <location>
        <begin position="1"/>
        <end position="442"/>
    </location>
</feature>
<feature type="domain" description="Obg" evidence="3">
    <location>
        <begin position="1"/>
        <end position="158"/>
    </location>
</feature>
<feature type="domain" description="OBG-type G" evidence="1">
    <location>
        <begin position="159"/>
        <end position="329"/>
    </location>
</feature>
<feature type="domain" description="OCT" evidence="2">
    <location>
        <begin position="349"/>
        <end position="427"/>
    </location>
</feature>
<feature type="binding site" evidence="1">
    <location>
        <begin position="165"/>
        <end position="172"/>
    </location>
    <ligand>
        <name>GTP</name>
        <dbReference type="ChEBI" id="CHEBI:37565"/>
    </ligand>
</feature>
<feature type="binding site" evidence="1">
    <location>
        <position position="172"/>
    </location>
    <ligand>
        <name>Mg(2+)</name>
        <dbReference type="ChEBI" id="CHEBI:18420"/>
    </ligand>
</feature>
<feature type="binding site" evidence="1">
    <location>
        <begin position="190"/>
        <end position="194"/>
    </location>
    <ligand>
        <name>GTP</name>
        <dbReference type="ChEBI" id="CHEBI:37565"/>
    </ligand>
</feature>
<feature type="binding site" evidence="1">
    <location>
        <position position="192"/>
    </location>
    <ligand>
        <name>Mg(2+)</name>
        <dbReference type="ChEBI" id="CHEBI:18420"/>
    </ligand>
</feature>
<feature type="binding site" evidence="1">
    <location>
        <begin position="212"/>
        <end position="215"/>
    </location>
    <ligand>
        <name>GTP</name>
        <dbReference type="ChEBI" id="CHEBI:37565"/>
    </ligand>
</feature>
<feature type="binding site" evidence="1">
    <location>
        <begin position="282"/>
        <end position="285"/>
    </location>
    <ligand>
        <name>GTP</name>
        <dbReference type="ChEBI" id="CHEBI:37565"/>
    </ligand>
</feature>
<feature type="binding site" evidence="1">
    <location>
        <begin position="310"/>
        <end position="312"/>
    </location>
    <ligand>
        <name>GTP</name>
        <dbReference type="ChEBI" id="CHEBI:37565"/>
    </ligand>
</feature>
<accession>B0TBW1</accession>
<gene>
    <name evidence="1" type="primary">obg</name>
    <name type="ordered locus">Helmi_26090</name>
    <name type="ORF">HM1_2705</name>
</gene>
<dbReference type="EC" id="3.6.5.-" evidence="1"/>
<dbReference type="EMBL" id="CP000930">
    <property type="protein sequence ID" value="ABZ85234.1"/>
    <property type="molecule type" value="Genomic_DNA"/>
</dbReference>
<dbReference type="RefSeq" id="WP_012283719.1">
    <property type="nucleotide sequence ID" value="NC_010337.2"/>
</dbReference>
<dbReference type="SMR" id="B0TBW1"/>
<dbReference type="STRING" id="498761.HM1_2705"/>
<dbReference type="KEGG" id="hmo:HM1_2705"/>
<dbReference type="eggNOG" id="COG0536">
    <property type="taxonomic scope" value="Bacteria"/>
</dbReference>
<dbReference type="HOGENOM" id="CLU_011747_2_1_9"/>
<dbReference type="OrthoDB" id="9807318at2"/>
<dbReference type="Proteomes" id="UP000008550">
    <property type="component" value="Chromosome"/>
</dbReference>
<dbReference type="GO" id="GO:0005737">
    <property type="term" value="C:cytoplasm"/>
    <property type="evidence" value="ECO:0007669"/>
    <property type="project" value="UniProtKB-SubCell"/>
</dbReference>
<dbReference type="GO" id="GO:0005525">
    <property type="term" value="F:GTP binding"/>
    <property type="evidence" value="ECO:0007669"/>
    <property type="project" value="UniProtKB-UniRule"/>
</dbReference>
<dbReference type="GO" id="GO:0003924">
    <property type="term" value="F:GTPase activity"/>
    <property type="evidence" value="ECO:0007669"/>
    <property type="project" value="UniProtKB-UniRule"/>
</dbReference>
<dbReference type="GO" id="GO:0000287">
    <property type="term" value="F:magnesium ion binding"/>
    <property type="evidence" value="ECO:0007669"/>
    <property type="project" value="InterPro"/>
</dbReference>
<dbReference type="GO" id="GO:0042254">
    <property type="term" value="P:ribosome biogenesis"/>
    <property type="evidence" value="ECO:0007669"/>
    <property type="project" value="UniProtKB-UniRule"/>
</dbReference>
<dbReference type="CDD" id="cd01898">
    <property type="entry name" value="Obg"/>
    <property type="match status" value="1"/>
</dbReference>
<dbReference type="FunFam" id="2.70.210.12:FF:000001">
    <property type="entry name" value="GTPase Obg"/>
    <property type="match status" value="1"/>
</dbReference>
<dbReference type="Gene3D" id="3.30.300.350">
    <property type="entry name" value="GTP-binding protein OBG, C-terminal domain"/>
    <property type="match status" value="1"/>
</dbReference>
<dbReference type="Gene3D" id="2.70.210.12">
    <property type="entry name" value="GTP1/OBG domain"/>
    <property type="match status" value="1"/>
</dbReference>
<dbReference type="Gene3D" id="3.40.50.300">
    <property type="entry name" value="P-loop containing nucleotide triphosphate hydrolases"/>
    <property type="match status" value="1"/>
</dbReference>
<dbReference type="HAMAP" id="MF_01454">
    <property type="entry name" value="GTPase_Obg"/>
    <property type="match status" value="1"/>
</dbReference>
<dbReference type="InterPro" id="IPR031167">
    <property type="entry name" value="G_OBG"/>
</dbReference>
<dbReference type="InterPro" id="IPR006073">
    <property type="entry name" value="GTP-bd"/>
</dbReference>
<dbReference type="InterPro" id="IPR014100">
    <property type="entry name" value="GTP-bd_Obg/CgtA"/>
</dbReference>
<dbReference type="InterPro" id="IPR036346">
    <property type="entry name" value="GTP-bd_prot_GTP1/OBG_C_sf"/>
</dbReference>
<dbReference type="InterPro" id="IPR006074">
    <property type="entry name" value="GTP1-OBG_CS"/>
</dbReference>
<dbReference type="InterPro" id="IPR006169">
    <property type="entry name" value="GTP1_OBG_dom"/>
</dbReference>
<dbReference type="InterPro" id="IPR036726">
    <property type="entry name" value="GTP1_OBG_dom_sf"/>
</dbReference>
<dbReference type="InterPro" id="IPR045086">
    <property type="entry name" value="OBG_GTPase"/>
</dbReference>
<dbReference type="InterPro" id="IPR015349">
    <property type="entry name" value="OCT_dom"/>
</dbReference>
<dbReference type="InterPro" id="IPR027417">
    <property type="entry name" value="P-loop_NTPase"/>
</dbReference>
<dbReference type="InterPro" id="IPR005225">
    <property type="entry name" value="Small_GTP-bd"/>
</dbReference>
<dbReference type="NCBIfam" id="TIGR02729">
    <property type="entry name" value="Obg_CgtA"/>
    <property type="match status" value="1"/>
</dbReference>
<dbReference type="NCBIfam" id="TIGR03595">
    <property type="entry name" value="Obg_CgtA_exten"/>
    <property type="match status" value="1"/>
</dbReference>
<dbReference type="NCBIfam" id="NF008954">
    <property type="entry name" value="PRK12296.1"/>
    <property type="match status" value="1"/>
</dbReference>
<dbReference type="NCBIfam" id="NF008955">
    <property type="entry name" value="PRK12297.1"/>
    <property type="match status" value="1"/>
</dbReference>
<dbReference type="NCBIfam" id="NF008956">
    <property type="entry name" value="PRK12299.1"/>
    <property type="match status" value="1"/>
</dbReference>
<dbReference type="NCBIfam" id="TIGR00231">
    <property type="entry name" value="small_GTP"/>
    <property type="match status" value="1"/>
</dbReference>
<dbReference type="PANTHER" id="PTHR11702">
    <property type="entry name" value="DEVELOPMENTALLY REGULATED GTP-BINDING PROTEIN-RELATED"/>
    <property type="match status" value="1"/>
</dbReference>
<dbReference type="PANTHER" id="PTHR11702:SF31">
    <property type="entry name" value="MITOCHONDRIAL RIBOSOME-ASSOCIATED GTPASE 2"/>
    <property type="match status" value="1"/>
</dbReference>
<dbReference type="Pfam" id="PF09269">
    <property type="entry name" value="DUF1967"/>
    <property type="match status" value="1"/>
</dbReference>
<dbReference type="Pfam" id="PF01018">
    <property type="entry name" value="GTP1_OBG"/>
    <property type="match status" value="1"/>
</dbReference>
<dbReference type="Pfam" id="PF01926">
    <property type="entry name" value="MMR_HSR1"/>
    <property type="match status" value="1"/>
</dbReference>
<dbReference type="PIRSF" id="PIRSF002401">
    <property type="entry name" value="GTP_bd_Obg/CgtA"/>
    <property type="match status" value="1"/>
</dbReference>
<dbReference type="PRINTS" id="PR00326">
    <property type="entry name" value="GTP1OBG"/>
</dbReference>
<dbReference type="SUPFAM" id="SSF102741">
    <property type="entry name" value="Obg GTP-binding protein C-terminal domain"/>
    <property type="match status" value="1"/>
</dbReference>
<dbReference type="SUPFAM" id="SSF82051">
    <property type="entry name" value="Obg GTP-binding protein N-terminal domain"/>
    <property type="match status" value="1"/>
</dbReference>
<dbReference type="SUPFAM" id="SSF52540">
    <property type="entry name" value="P-loop containing nucleoside triphosphate hydrolases"/>
    <property type="match status" value="1"/>
</dbReference>
<dbReference type="PROSITE" id="PS51710">
    <property type="entry name" value="G_OBG"/>
    <property type="match status" value="1"/>
</dbReference>
<dbReference type="PROSITE" id="PS00905">
    <property type="entry name" value="GTP1_OBG"/>
    <property type="match status" value="1"/>
</dbReference>
<dbReference type="PROSITE" id="PS51883">
    <property type="entry name" value="OBG"/>
    <property type="match status" value="1"/>
</dbReference>
<dbReference type="PROSITE" id="PS51881">
    <property type="entry name" value="OCT"/>
    <property type="match status" value="1"/>
</dbReference>
<reference key="1">
    <citation type="journal article" date="2008" name="J. Bacteriol.">
        <title>The genome of Heliobacterium modesticaldum, a phototrophic representative of the Firmicutes containing the simplest photosynthetic apparatus.</title>
        <authorList>
            <person name="Sattley W.M."/>
            <person name="Madigan M.T."/>
            <person name="Swingley W.D."/>
            <person name="Cheung P.C."/>
            <person name="Clocksin K.M."/>
            <person name="Conrad A.L."/>
            <person name="Dejesa L.C."/>
            <person name="Honchak B.M."/>
            <person name="Jung D.O."/>
            <person name="Karbach L.E."/>
            <person name="Kurdoglu A."/>
            <person name="Lahiri S."/>
            <person name="Mastrian S.D."/>
            <person name="Page L.E."/>
            <person name="Taylor H.L."/>
            <person name="Wang Z.T."/>
            <person name="Raymond J."/>
            <person name="Chen M."/>
            <person name="Blankenship R.E."/>
            <person name="Touchman J.W."/>
        </authorList>
    </citation>
    <scope>NUCLEOTIDE SEQUENCE [LARGE SCALE GENOMIC DNA]</scope>
    <source>
        <strain>ATCC 51547 / Ice1</strain>
    </source>
</reference>
<protein>
    <recommendedName>
        <fullName evidence="1">GTPase Obg</fullName>
        <ecNumber evidence="1">3.6.5.-</ecNumber>
    </recommendedName>
    <alternativeName>
        <fullName evidence="1">GTP-binding protein Obg</fullName>
    </alternativeName>
</protein>